<proteinExistence type="inferred from homology"/>
<gene>
    <name evidence="4" type="primary">SERPINA3-2</name>
</gene>
<evidence type="ECO:0000250" key="1"/>
<evidence type="ECO:0000250" key="2">
    <source>
        <dbReference type="UniProtKB" id="Q9TTE1"/>
    </source>
</evidence>
<evidence type="ECO:0000255" key="3"/>
<evidence type="ECO:0000312" key="4">
    <source>
        <dbReference type="EMBL" id="ABM55496.1"/>
    </source>
</evidence>
<dbReference type="EMBL" id="EF153626">
    <property type="protein sequence ID" value="ABM55496.1"/>
    <property type="molecule type" value="Genomic_DNA"/>
</dbReference>
<dbReference type="RefSeq" id="NP_001139773.1">
    <property type="nucleotide sequence ID" value="NM_001146301.1"/>
</dbReference>
<dbReference type="SMR" id="A2I7M9"/>
<dbReference type="FunCoup" id="A2I7M9">
    <property type="interactions" value="121"/>
</dbReference>
<dbReference type="MEROPS" id="I04.027"/>
<dbReference type="GlyCosmos" id="A2I7M9">
    <property type="glycosylation" value="4 sites, No reported glycans"/>
</dbReference>
<dbReference type="GlyGen" id="A2I7M9">
    <property type="glycosylation" value="4 sites"/>
</dbReference>
<dbReference type="PeptideAtlas" id="A2I7M9"/>
<dbReference type="GeneID" id="100272170"/>
<dbReference type="CTD" id="100272170"/>
<dbReference type="InParanoid" id="A2I7M9"/>
<dbReference type="Proteomes" id="UP000009136">
    <property type="component" value="Unplaced"/>
</dbReference>
<dbReference type="GO" id="GO:0042583">
    <property type="term" value="C:chromaffin granule"/>
    <property type="evidence" value="ECO:0007669"/>
    <property type="project" value="UniProtKB-SubCell"/>
</dbReference>
<dbReference type="GO" id="GO:0031410">
    <property type="term" value="C:cytoplasmic vesicle"/>
    <property type="evidence" value="ECO:0000250"/>
    <property type="project" value="UniProtKB"/>
</dbReference>
<dbReference type="GO" id="GO:0005615">
    <property type="term" value="C:extracellular space"/>
    <property type="evidence" value="ECO:0000250"/>
    <property type="project" value="UniProtKB"/>
</dbReference>
<dbReference type="GO" id="GO:0004867">
    <property type="term" value="F:serine-type endopeptidase inhibitor activity"/>
    <property type="evidence" value="ECO:0000250"/>
    <property type="project" value="UniProtKB"/>
</dbReference>
<dbReference type="CDD" id="cd19551">
    <property type="entry name" value="serpinA3_A1AC"/>
    <property type="match status" value="1"/>
</dbReference>
<dbReference type="FunFam" id="3.30.497.10:FF:000001">
    <property type="entry name" value="Serine protease inhibitor"/>
    <property type="match status" value="1"/>
</dbReference>
<dbReference type="FunFam" id="2.30.39.10:FF:000002">
    <property type="entry name" value="Serpin family D member 1"/>
    <property type="match status" value="1"/>
</dbReference>
<dbReference type="Gene3D" id="2.30.39.10">
    <property type="entry name" value="Alpha-1-antitrypsin, domain 1"/>
    <property type="match status" value="1"/>
</dbReference>
<dbReference type="Gene3D" id="3.30.497.10">
    <property type="entry name" value="Antithrombin, subunit I, domain 2"/>
    <property type="match status" value="1"/>
</dbReference>
<dbReference type="InterPro" id="IPR023795">
    <property type="entry name" value="Serpin_CS"/>
</dbReference>
<dbReference type="InterPro" id="IPR023796">
    <property type="entry name" value="Serpin_dom"/>
</dbReference>
<dbReference type="InterPro" id="IPR000215">
    <property type="entry name" value="Serpin_fam"/>
</dbReference>
<dbReference type="InterPro" id="IPR036186">
    <property type="entry name" value="Serpin_sf"/>
</dbReference>
<dbReference type="InterPro" id="IPR042178">
    <property type="entry name" value="Serpin_sf_1"/>
</dbReference>
<dbReference type="InterPro" id="IPR042185">
    <property type="entry name" value="Serpin_sf_2"/>
</dbReference>
<dbReference type="PANTHER" id="PTHR11461:SF145">
    <property type="entry name" value="ALPHA-1-ANTICHYMOTRYPSIN"/>
    <property type="match status" value="1"/>
</dbReference>
<dbReference type="PANTHER" id="PTHR11461">
    <property type="entry name" value="SERINE PROTEASE INHIBITOR, SERPIN"/>
    <property type="match status" value="1"/>
</dbReference>
<dbReference type="Pfam" id="PF00079">
    <property type="entry name" value="Serpin"/>
    <property type="match status" value="1"/>
</dbReference>
<dbReference type="SMART" id="SM00093">
    <property type="entry name" value="SERPIN"/>
    <property type="match status" value="1"/>
</dbReference>
<dbReference type="SUPFAM" id="SSF56574">
    <property type="entry name" value="Serpins"/>
    <property type="match status" value="1"/>
</dbReference>
<dbReference type="PROSITE" id="PS00284">
    <property type="entry name" value="SERPIN"/>
    <property type="match status" value="1"/>
</dbReference>
<feature type="signal peptide" evidence="1">
    <location>
        <begin position="1"/>
        <end position="24"/>
    </location>
</feature>
<feature type="chain" id="PRO_0000401157" description="Serpin A3-2" evidence="3">
    <location>
        <begin position="25"/>
        <end position="411"/>
    </location>
</feature>
<feature type="site" description="Reactive bond" evidence="2">
    <location>
        <begin position="377"/>
        <end position="378"/>
    </location>
</feature>
<feature type="glycosylation site" description="N-linked (GlcNAc...) asparagine" evidence="3">
    <location>
        <position position="100"/>
    </location>
</feature>
<feature type="glycosylation site" description="N-linked (GlcNAc...) asparagine" evidence="3">
    <location>
        <position position="180"/>
    </location>
</feature>
<feature type="glycosylation site" description="N-linked (GlcNAc...) asparagine" evidence="3">
    <location>
        <position position="230"/>
    </location>
</feature>
<feature type="glycosylation site" description="N-linked (GlcNAc...) asparagine" evidence="3">
    <location>
        <position position="264"/>
    </location>
</feature>
<name>SPA32_BOVIN</name>
<comment type="function">
    <text evidence="2">Serine protease inhibitor.</text>
</comment>
<comment type="subunit">
    <text evidence="2">Homodimer.</text>
</comment>
<comment type="subcellular location">
    <subcellularLocation>
        <location evidence="2">Cytoplasmic vesicle</location>
        <location evidence="2">Secretory vesicle</location>
        <location evidence="2">Chromaffin granule</location>
    </subcellularLocation>
    <subcellularLocation>
        <location evidence="2">Secreted</location>
    </subcellularLocation>
</comment>
<comment type="similarity">
    <text evidence="3">Belongs to the serpin family.</text>
</comment>
<organism>
    <name type="scientific">Bos taurus</name>
    <name type="common">Bovine</name>
    <dbReference type="NCBI Taxonomy" id="9913"/>
    <lineage>
        <taxon>Eukaryota</taxon>
        <taxon>Metazoa</taxon>
        <taxon>Chordata</taxon>
        <taxon>Craniata</taxon>
        <taxon>Vertebrata</taxon>
        <taxon>Euteleostomi</taxon>
        <taxon>Mammalia</taxon>
        <taxon>Eutheria</taxon>
        <taxon>Laurasiatheria</taxon>
        <taxon>Artiodactyla</taxon>
        <taxon>Ruminantia</taxon>
        <taxon>Pecora</taxon>
        <taxon>Bovidae</taxon>
        <taxon>Bovinae</taxon>
        <taxon>Bos</taxon>
    </lineage>
</organism>
<keyword id="KW-0968">Cytoplasmic vesicle</keyword>
<keyword id="KW-0325">Glycoprotein</keyword>
<keyword id="KW-0646">Protease inhibitor</keyword>
<keyword id="KW-1185">Reference proteome</keyword>
<keyword id="KW-0964">Secreted</keyword>
<keyword id="KW-0722">Serine protease inhibitor</keyword>
<keyword id="KW-0732">Signal</keyword>
<reference key="1">
    <citation type="journal article" date="2008" name="BMC Genomics">
        <title>An original SERPINA3 gene cluster: elucidation of genomic organization and gene expression in the Bos taurus 21q24 region.</title>
        <authorList>
            <person name="Pelissier P."/>
            <person name="Delourme D."/>
            <person name="Germot A."/>
            <person name="Blanchet X."/>
            <person name="Becila S."/>
            <person name="Maftah A."/>
            <person name="Leveziel H."/>
            <person name="Ouali A."/>
            <person name="Bremaud L."/>
        </authorList>
    </citation>
    <scope>NUCLEOTIDE SEQUENCE [GENOMIC DNA]</scope>
    <scope>NOMENCLATURE</scope>
</reference>
<accession>A2I7M9</accession>
<sequence length="411" mass="46237">MRAERTSFLLALGLLVAGIRSVHCLPENVVVKDQHRRVDGHTLASSNTDFAFSLYKQLALKNPNKNVILSPLSVSIALAFLSLGARGSTLTEILEGLKFNLTEIQEKEIHHSFQHLLQALNQPSNQLQLSVGNAMFVQEELKLLDKFIEDAQVLYSSEAFPTNFRDSEAARSLINDYVKNKTQGKIEELFKYLSPRTELVLVNYIYFKAQWKTPFDPKHTEQAEFHVSDNKTVEVPMMTLDLETPYFRDEELGCTLVELTYTSNDSALFILPDEGKMRDLEAKLTPETLTRWRNSLQPRRIHELYLPKFSIKSNYELNDILSQLGIRKIFANADLSGITGTADLVVSQVVHGAALDVDEEGTEGVAATGIGIERTFLRIIVRVNRPFLIAVVLKDTQSIIFLGKVTNPSEA</sequence>
<protein>
    <recommendedName>
        <fullName>Serpin A3-2</fullName>
    </recommendedName>
</protein>